<organismHost>
    <name type="scientific">Homo sapiens</name>
    <name type="common">Human</name>
    <dbReference type="NCBI Taxonomy" id="9606"/>
</organismHost>
<protein>
    <recommendedName>
        <fullName evidence="1">Protein E7</fullName>
    </recommendedName>
</protein>
<feature type="chain" id="PRO_0000133453" description="Protein E7">
    <location>
        <begin position="1"/>
        <end position="92"/>
    </location>
</feature>
<feature type="zinc finger region" evidence="1">
    <location>
        <begin position="55"/>
        <end position="91"/>
    </location>
</feature>
<feature type="region of interest" description="E7 terminal domain" evidence="1">
    <location>
        <begin position="1"/>
        <end position="43"/>
    </location>
</feature>
<feature type="short sequence motif" description="LXCXE motif; interaction with host RB1 and TMEM173/STING" evidence="1">
    <location>
        <begin position="24"/>
        <end position="28"/>
    </location>
</feature>
<feature type="short sequence motif" description="Nuclear export signal" evidence="1">
    <location>
        <begin position="73"/>
        <end position="81"/>
    </location>
</feature>
<proteinExistence type="inferred from homology"/>
<dbReference type="EMBL" id="X55965">
    <property type="protein sequence ID" value="CAA39431.1"/>
    <property type="molecule type" value="Genomic_DNA"/>
</dbReference>
<dbReference type="PIR" id="S15622">
    <property type="entry name" value="S15622"/>
</dbReference>
<dbReference type="SMR" id="P22160"/>
<dbReference type="Proteomes" id="UP000007667">
    <property type="component" value="Genome"/>
</dbReference>
<dbReference type="GO" id="GO:0030430">
    <property type="term" value="C:host cell cytoplasm"/>
    <property type="evidence" value="ECO:0007669"/>
    <property type="project" value="UniProtKB-SubCell"/>
</dbReference>
<dbReference type="GO" id="GO:0042025">
    <property type="term" value="C:host cell nucleus"/>
    <property type="evidence" value="ECO:0007669"/>
    <property type="project" value="UniProtKB-SubCell"/>
</dbReference>
<dbReference type="GO" id="GO:0003677">
    <property type="term" value="F:DNA binding"/>
    <property type="evidence" value="ECO:0007669"/>
    <property type="project" value="UniProtKB-UniRule"/>
</dbReference>
<dbReference type="GO" id="GO:0003700">
    <property type="term" value="F:DNA-binding transcription factor activity"/>
    <property type="evidence" value="ECO:0007669"/>
    <property type="project" value="UniProtKB-UniRule"/>
</dbReference>
<dbReference type="GO" id="GO:0019904">
    <property type="term" value="F:protein domain specific binding"/>
    <property type="evidence" value="ECO:0007669"/>
    <property type="project" value="UniProtKB-UniRule"/>
</dbReference>
<dbReference type="GO" id="GO:0008270">
    <property type="term" value="F:zinc ion binding"/>
    <property type="evidence" value="ECO:0007669"/>
    <property type="project" value="UniProtKB-KW"/>
</dbReference>
<dbReference type="GO" id="GO:0006351">
    <property type="term" value="P:DNA-templated transcription"/>
    <property type="evidence" value="ECO:0007669"/>
    <property type="project" value="UniProtKB-UniRule"/>
</dbReference>
<dbReference type="GO" id="GO:0039645">
    <property type="term" value="P:symbiont-mediated perturbation of host cell cycle G1/S transition checkpoint"/>
    <property type="evidence" value="ECO:0007669"/>
    <property type="project" value="UniProtKB-UniRule"/>
</dbReference>
<dbReference type="GO" id="GO:0052170">
    <property type="term" value="P:symbiont-mediated suppression of host innate immune response"/>
    <property type="evidence" value="ECO:0007669"/>
    <property type="project" value="UniProtKB-KW"/>
</dbReference>
<dbReference type="GO" id="GO:0039502">
    <property type="term" value="P:symbiont-mediated suppression of host type I interferon-mediated signaling pathway"/>
    <property type="evidence" value="ECO:0007669"/>
    <property type="project" value="UniProtKB-UniRule"/>
</dbReference>
<dbReference type="Gene3D" id="3.30.160.330">
    <property type="match status" value="1"/>
</dbReference>
<dbReference type="HAMAP" id="MF_04004">
    <property type="entry name" value="PPV_E7"/>
    <property type="match status" value="1"/>
</dbReference>
<dbReference type="InterPro" id="IPR000148">
    <property type="entry name" value="Papilloma_E7"/>
</dbReference>
<dbReference type="Pfam" id="PF00527">
    <property type="entry name" value="E7"/>
    <property type="match status" value="1"/>
</dbReference>
<dbReference type="PIRSF" id="PIRSF003407">
    <property type="entry name" value="Papvi_E7"/>
    <property type="match status" value="1"/>
</dbReference>
<dbReference type="SUPFAM" id="SSF161234">
    <property type="entry name" value="E7 C-terminal domain-like"/>
    <property type="match status" value="1"/>
</dbReference>
<sequence length="92" mass="10376">MHGERPSLEDITLILEEIPEIVDLHCDEQFDNSEEDTNYQLTEPAVQAYGVVTTCCKCHSTVRLVVECGAADIRHLEQLFLNTLTIVCPRCV</sequence>
<reference key="1">
    <citation type="journal article" date="1990" name="Virus Res.">
        <title>A comparative sequence analysis of two human papillomavirus (HPV) types 2a and 57.</title>
        <authorList>
            <person name="Hirsch-Behnam A."/>
            <person name="Delius H."/>
            <person name="de Villiers E.M."/>
        </authorList>
    </citation>
    <scope>NUCLEOTIDE SEQUENCE [GENOMIC DNA]</scope>
</reference>
<reference key="2">
    <citation type="journal article" date="2002" name="Rev. Med. Virol.">
        <title>Interactions of SV40 large T antigen and other viral proteins with retinoblastoma tumour suppressor.</title>
        <authorList>
            <person name="Lee C."/>
            <person name="Cho Y."/>
        </authorList>
    </citation>
    <scope>REVIEW</scope>
</reference>
<accession>P22160</accession>
<gene>
    <name evidence="1" type="primary">E7</name>
</gene>
<name>VE7_HPV57</name>
<organism>
    <name type="scientific">Human papillomavirus 57</name>
    <dbReference type="NCBI Taxonomy" id="333753"/>
    <lineage>
        <taxon>Viruses</taxon>
        <taxon>Monodnaviria</taxon>
        <taxon>Shotokuvirae</taxon>
        <taxon>Cossaviricota</taxon>
        <taxon>Papovaviricetes</taxon>
        <taxon>Zurhausenvirales</taxon>
        <taxon>Papillomaviridae</taxon>
        <taxon>Firstpapillomavirinae</taxon>
        <taxon>Alphapapillomavirus</taxon>
        <taxon>Alphapapillomavirus 4</taxon>
    </lineage>
</organism>
<comment type="function">
    <text evidence="1">Plays a role in viral genome replication by driving entry of quiescent cells into the cell cycle. Stimulation of progression from G1 to S phase allows the virus to efficiently use the cellular DNA replicating machinery to achieve viral genome replication. E7 protein has both transforming and trans-activating activities. Induces the disassembly of the E2F1 transcription factor from RB1, with subsequent transcriptional activation of E2F1-regulated S-phase genes. Interferes with host histone deacetylation mediated by HDAC1 and HDAC2, leading to transcription activation. Also plays a role in the inhibition of both antiviral and antiproliferative functions of host interferon alpha. Interaction with host TMEM173/STING impairs the ability of TMEM173/STING to sense cytosolic DNA and promote the production of type I interferon (IFN-alpha and IFN-beta).</text>
</comment>
<comment type="subunit">
    <text evidence="1">Homodimer. Homooligomer. Interacts with host RB1; this interaction induces dissociation of RB1-E2F1 complex thereby disrupting RB1 activity. Interacts with host EP300; this interaction represses EP300 transcriptional activity. Interacts with protein E2; this interaction inhibits E7 oncogenic activity. Interacts with host TMEM173/STING; this interaction impairs the ability of TMEM173/STING to sense cytosolic DNA and promote the production of type I interferon (IFN-alpha and IFN-beta).</text>
</comment>
<comment type="subcellular location">
    <subcellularLocation>
        <location evidence="1">Host cytoplasm</location>
    </subcellularLocation>
    <subcellularLocation>
        <location evidence="1">Host nucleus</location>
    </subcellularLocation>
    <text evidence="1">Predominantly found in the host nucleus.</text>
</comment>
<comment type="domain">
    <text evidence="1">The E7 terminal domain is an intrinsically disordered domain, whose flexibility and conformational transitions confer target adaptability to the oncoprotein. It allows adaptation to a variety of protein targets and exposes the PEST degradation sequence that regulates its turnover in the cell.</text>
</comment>
<comment type="PTM">
    <text evidence="1">Highly phosphorylated.</text>
</comment>
<comment type="similarity">
    <text evidence="1">Belongs to the papillomaviridae E7 protein family.</text>
</comment>
<evidence type="ECO:0000255" key="1">
    <source>
        <dbReference type="HAMAP-Rule" id="MF_04004"/>
    </source>
</evidence>
<keyword id="KW-0010">Activator</keyword>
<keyword id="KW-0238">DNA-binding</keyword>
<keyword id="KW-0244">Early protein</keyword>
<keyword id="KW-1078">G1/S host cell cycle checkpoint dysregulation by virus</keyword>
<keyword id="KW-1035">Host cytoplasm</keyword>
<keyword id="KW-1048">Host nucleus</keyword>
<keyword id="KW-0945">Host-virus interaction</keyword>
<keyword id="KW-1090">Inhibition of host innate immune response by virus</keyword>
<keyword id="KW-1114">Inhibition of host interferon signaling pathway by virus</keyword>
<keyword id="KW-0922">Interferon antiviral system evasion</keyword>
<keyword id="KW-0479">Metal-binding</keyword>
<keyword id="KW-1121">Modulation of host cell cycle by virus</keyword>
<keyword id="KW-0553">Oncogene</keyword>
<keyword id="KW-0804">Transcription</keyword>
<keyword id="KW-0805">Transcription regulation</keyword>
<keyword id="KW-0899">Viral immunoevasion</keyword>
<keyword id="KW-0862">Zinc</keyword>
<keyword id="KW-0863">Zinc-finger</keyword>